<evidence type="ECO:0000250" key="1"/>
<evidence type="ECO:0000255" key="2">
    <source>
        <dbReference type="HAMAP-Rule" id="MF_00103"/>
    </source>
</evidence>
<proteinExistence type="inferred from homology"/>
<comment type="function">
    <text evidence="2">Involved in base excision repair of DNA damaged by oxidation or by mutagenic agents. Acts as a DNA glycosylase that recognizes and removes damaged bases. Has a preference for oxidized purines, such as 7,8-dihydro-8-oxoguanine (8-oxoG). Has AP (apurinic/apyrimidinic) lyase activity and introduces nicks in the DNA strand. Cleaves the DNA backbone by beta-delta elimination to generate a single-strand break at the site of the removed base with both 3'- and 5'-phosphates.</text>
</comment>
<comment type="catalytic activity">
    <reaction evidence="2">
        <text>Hydrolysis of DNA containing ring-opened 7-methylguanine residues, releasing 2,6-diamino-4-hydroxy-5-(N-methyl)formamidopyrimidine.</text>
        <dbReference type="EC" id="3.2.2.23"/>
    </reaction>
</comment>
<comment type="catalytic activity">
    <reaction evidence="2">
        <text>2'-deoxyribonucleotide-(2'-deoxyribose 5'-phosphate)-2'-deoxyribonucleotide-DNA = a 3'-end 2'-deoxyribonucleotide-(2,3-dehydro-2,3-deoxyribose 5'-phosphate)-DNA + a 5'-end 5'-phospho-2'-deoxyribonucleoside-DNA + H(+)</text>
        <dbReference type="Rhea" id="RHEA:66592"/>
        <dbReference type="Rhea" id="RHEA-COMP:13180"/>
        <dbReference type="Rhea" id="RHEA-COMP:16897"/>
        <dbReference type="Rhea" id="RHEA-COMP:17067"/>
        <dbReference type="ChEBI" id="CHEBI:15378"/>
        <dbReference type="ChEBI" id="CHEBI:136412"/>
        <dbReference type="ChEBI" id="CHEBI:157695"/>
        <dbReference type="ChEBI" id="CHEBI:167181"/>
        <dbReference type="EC" id="4.2.99.18"/>
    </reaction>
</comment>
<comment type="cofactor">
    <cofactor evidence="2">
        <name>Zn(2+)</name>
        <dbReference type="ChEBI" id="CHEBI:29105"/>
    </cofactor>
    <text evidence="2">Binds 1 zinc ion per subunit.</text>
</comment>
<comment type="subunit">
    <text evidence="2">Monomer.</text>
</comment>
<comment type="similarity">
    <text evidence="2">Belongs to the FPG family.</text>
</comment>
<keyword id="KW-0227">DNA damage</keyword>
<keyword id="KW-0234">DNA repair</keyword>
<keyword id="KW-0238">DNA-binding</keyword>
<keyword id="KW-0326">Glycosidase</keyword>
<keyword id="KW-0378">Hydrolase</keyword>
<keyword id="KW-0456">Lyase</keyword>
<keyword id="KW-0479">Metal-binding</keyword>
<keyword id="KW-0511">Multifunctional enzyme</keyword>
<keyword id="KW-0862">Zinc</keyword>
<keyword id="KW-0863">Zinc-finger</keyword>
<accession>Q5PC09</accession>
<name>FPG_SALPA</name>
<organism>
    <name type="scientific">Salmonella paratyphi A (strain ATCC 9150 / SARB42)</name>
    <dbReference type="NCBI Taxonomy" id="295319"/>
    <lineage>
        <taxon>Bacteria</taxon>
        <taxon>Pseudomonadati</taxon>
        <taxon>Pseudomonadota</taxon>
        <taxon>Gammaproteobacteria</taxon>
        <taxon>Enterobacterales</taxon>
        <taxon>Enterobacteriaceae</taxon>
        <taxon>Salmonella</taxon>
    </lineage>
</organism>
<gene>
    <name evidence="2" type="primary">mutM</name>
    <name evidence="2" type="synonym">fpg</name>
    <name type="ordered locus">SPA3578</name>
</gene>
<sequence length="269" mass="30223">MPELPEVETSRRGIEPHLVGATILHAHIRNGRLRWPVSDEIYRLSDTPVLSVQRRAKYLLLELPDGWIIIHLGMSGSLRILSEALPAEKHDHVDLVMSNGKILRYTDPRRFGAWLWTKELEGHNVLAHLGPEPLSDEFNGEYLQQKCAKKKTAIKPWLMDNKLVVGVGNIYASESLFAAGIHPDRLASSLSTEECDLLARVIKAVLLRSIEQGGTTLKDFLQSDGKPGYFAQELQVYGRKGEPCRVCGTPIVATKHAQRATFYCRHCQK</sequence>
<reference key="1">
    <citation type="journal article" date="2004" name="Nat. Genet.">
        <title>Comparison of genome degradation in Paratyphi A and Typhi, human-restricted serovars of Salmonella enterica that cause typhoid.</title>
        <authorList>
            <person name="McClelland M."/>
            <person name="Sanderson K.E."/>
            <person name="Clifton S.W."/>
            <person name="Latreille P."/>
            <person name="Porwollik S."/>
            <person name="Sabo A."/>
            <person name="Meyer R."/>
            <person name="Bieri T."/>
            <person name="Ozersky P."/>
            <person name="McLellan M."/>
            <person name="Harkins C.R."/>
            <person name="Wang C."/>
            <person name="Nguyen C."/>
            <person name="Berghoff A."/>
            <person name="Elliott G."/>
            <person name="Kohlberg S."/>
            <person name="Strong C."/>
            <person name="Du F."/>
            <person name="Carter J."/>
            <person name="Kremizki C."/>
            <person name="Layman D."/>
            <person name="Leonard S."/>
            <person name="Sun H."/>
            <person name="Fulton L."/>
            <person name="Nash W."/>
            <person name="Miner T."/>
            <person name="Minx P."/>
            <person name="Delehaunty K."/>
            <person name="Fronick C."/>
            <person name="Magrini V."/>
            <person name="Nhan M."/>
            <person name="Warren W."/>
            <person name="Florea L."/>
            <person name="Spieth J."/>
            <person name="Wilson R.K."/>
        </authorList>
    </citation>
    <scope>NUCLEOTIDE SEQUENCE [LARGE SCALE GENOMIC DNA]</scope>
    <source>
        <strain>ATCC 9150 / SARB42</strain>
    </source>
</reference>
<protein>
    <recommendedName>
        <fullName evidence="2">Formamidopyrimidine-DNA glycosylase</fullName>
        <shortName evidence="2">Fapy-DNA glycosylase</shortName>
        <ecNumber evidence="2">3.2.2.23</ecNumber>
    </recommendedName>
    <alternativeName>
        <fullName evidence="2">DNA-(apurinic or apyrimidinic site) lyase MutM</fullName>
        <shortName evidence="2">AP lyase MutM</shortName>
        <ecNumber evidence="2">4.2.99.18</ecNumber>
    </alternativeName>
</protein>
<dbReference type="EC" id="3.2.2.23" evidence="2"/>
<dbReference type="EC" id="4.2.99.18" evidence="2"/>
<dbReference type="EMBL" id="CP000026">
    <property type="protein sequence ID" value="AAV79379.1"/>
    <property type="molecule type" value="Genomic_DNA"/>
</dbReference>
<dbReference type="RefSeq" id="WP_001114515.1">
    <property type="nucleotide sequence ID" value="NC_006511.1"/>
</dbReference>
<dbReference type="SMR" id="Q5PC09"/>
<dbReference type="KEGG" id="spt:SPA3578"/>
<dbReference type="HOGENOM" id="CLU_038423_1_1_6"/>
<dbReference type="Proteomes" id="UP000008185">
    <property type="component" value="Chromosome"/>
</dbReference>
<dbReference type="GO" id="GO:0034039">
    <property type="term" value="F:8-oxo-7,8-dihydroguanine DNA N-glycosylase activity"/>
    <property type="evidence" value="ECO:0007669"/>
    <property type="project" value="TreeGrafter"/>
</dbReference>
<dbReference type="GO" id="GO:0140078">
    <property type="term" value="F:class I DNA-(apurinic or apyrimidinic site) endonuclease activity"/>
    <property type="evidence" value="ECO:0007669"/>
    <property type="project" value="UniProtKB-EC"/>
</dbReference>
<dbReference type="GO" id="GO:0003684">
    <property type="term" value="F:damaged DNA binding"/>
    <property type="evidence" value="ECO:0007669"/>
    <property type="project" value="InterPro"/>
</dbReference>
<dbReference type="GO" id="GO:0008270">
    <property type="term" value="F:zinc ion binding"/>
    <property type="evidence" value="ECO:0007669"/>
    <property type="project" value="UniProtKB-UniRule"/>
</dbReference>
<dbReference type="GO" id="GO:0006284">
    <property type="term" value="P:base-excision repair"/>
    <property type="evidence" value="ECO:0007669"/>
    <property type="project" value="InterPro"/>
</dbReference>
<dbReference type="CDD" id="cd08966">
    <property type="entry name" value="EcFpg-like_N"/>
    <property type="match status" value="1"/>
</dbReference>
<dbReference type="FunFam" id="1.10.8.50:FF:000003">
    <property type="entry name" value="Formamidopyrimidine-DNA glycosylase"/>
    <property type="match status" value="1"/>
</dbReference>
<dbReference type="FunFam" id="3.20.190.10:FF:000001">
    <property type="entry name" value="Formamidopyrimidine-DNA glycosylase"/>
    <property type="match status" value="1"/>
</dbReference>
<dbReference type="Gene3D" id="1.10.8.50">
    <property type="match status" value="1"/>
</dbReference>
<dbReference type="Gene3D" id="3.20.190.10">
    <property type="entry name" value="MutM-like, N-terminal"/>
    <property type="match status" value="1"/>
</dbReference>
<dbReference type="HAMAP" id="MF_00103">
    <property type="entry name" value="Fapy_DNA_glycosyl"/>
    <property type="match status" value="1"/>
</dbReference>
<dbReference type="InterPro" id="IPR015886">
    <property type="entry name" value="DNA_glyclase/AP_lyase_DNA-bd"/>
</dbReference>
<dbReference type="InterPro" id="IPR015887">
    <property type="entry name" value="DNA_glyclase_Znf_dom_DNA_BS"/>
</dbReference>
<dbReference type="InterPro" id="IPR020629">
    <property type="entry name" value="Formamido-pyr_DNA_Glyclase"/>
</dbReference>
<dbReference type="InterPro" id="IPR012319">
    <property type="entry name" value="FPG_cat"/>
</dbReference>
<dbReference type="InterPro" id="IPR035937">
    <property type="entry name" value="MutM-like_N-ter"/>
</dbReference>
<dbReference type="InterPro" id="IPR010979">
    <property type="entry name" value="Ribosomal_uS13-like_H2TH"/>
</dbReference>
<dbReference type="InterPro" id="IPR000214">
    <property type="entry name" value="Znf_DNA_glyclase/AP_lyase"/>
</dbReference>
<dbReference type="InterPro" id="IPR010663">
    <property type="entry name" value="Znf_FPG/IleRS"/>
</dbReference>
<dbReference type="NCBIfam" id="TIGR00577">
    <property type="entry name" value="fpg"/>
    <property type="match status" value="1"/>
</dbReference>
<dbReference type="NCBIfam" id="NF002211">
    <property type="entry name" value="PRK01103.1"/>
    <property type="match status" value="1"/>
</dbReference>
<dbReference type="PANTHER" id="PTHR22993">
    <property type="entry name" value="FORMAMIDOPYRIMIDINE-DNA GLYCOSYLASE"/>
    <property type="match status" value="1"/>
</dbReference>
<dbReference type="PANTHER" id="PTHR22993:SF9">
    <property type="entry name" value="FORMAMIDOPYRIMIDINE-DNA GLYCOSYLASE"/>
    <property type="match status" value="1"/>
</dbReference>
<dbReference type="Pfam" id="PF01149">
    <property type="entry name" value="Fapy_DNA_glyco"/>
    <property type="match status" value="1"/>
</dbReference>
<dbReference type="Pfam" id="PF06831">
    <property type="entry name" value="H2TH"/>
    <property type="match status" value="1"/>
</dbReference>
<dbReference type="Pfam" id="PF06827">
    <property type="entry name" value="zf-FPG_IleRS"/>
    <property type="match status" value="1"/>
</dbReference>
<dbReference type="SMART" id="SM00898">
    <property type="entry name" value="Fapy_DNA_glyco"/>
    <property type="match status" value="1"/>
</dbReference>
<dbReference type="SMART" id="SM01232">
    <property type="entry name" value="H2TH"/>
    <property type="match status" value="1"/>
</dbReference>
<dbReference type="SUPFAM" id="SSF57716">
    <property type="entry name" value="Glucocorticoid receptor-like (DNA-binding domain)"/>
    <property type="match status" value="1"/>
</dbReference>
<dbReference type="SUPFAM" id="SSF81624">
    <property type="entry name" value="N-terminal domain of MutM-like DNA repair proteins"/>
    <property type="match status" value="1"/>
</dbReference>
<dbReference type="SUPFAM" id="SSF46946">
    <property type="entry name" value="S13-like H2TH domain"/>
    <property type="match status" value="1"/>
</dbReference>
<dbReference type="PROSITE" id="PS51068">
    <property type="entry name" value="FPG_CAT"/>
    <property type="match status" value="1"/>
</dbReference>
<dbReference type="PROSITE" id="PS01242">
    <property type="entry name" value="ZF_FPG_1"/>
    <property type="match status" value="1"/>
</dbReference>
<dbReference type="PROSITE" id="PS51066">
    <property type="entry name" value="ZF_FPG_2"/>
    <property type="match status" value="1"/>
</dbReference>
<feature type="initiator methionine" description="Removed" evidence="1">
    <location>
        <position position="1"/>
    </location>
</feature>
<feature type="chain" id="PRO_0000228468" description="Formamidopyrimidine-DNA glycosylase">
    <location>
        <begin position="2"/>
        <end position="269"/>
    </location>
</feature>
<feature type="zinc finger region" description="FPG-type" evidence="2">
    <location>
        <begin position="235"/>
        <end position="269"/>
    </location>
</feature>
<feature type="active site" description="Schiff-base intermediate with DNA" evidence="2">
    <location>
        <position position="2"/>
    </location>
</feature>
<feature type="active site" description="Proton donor" evidence="2">
    <location>
        <position position="3"/>
    </location>
</feature>
<feature type="active site" description="Proton donor; for beta-elimination activity" evidence="2">
    <location>
        <position position="57"/>
    </location>
</feature>
<feature type="active site" description="Proton donor; for delta-elimination activity" evidence="2">
    <location>
        <position position="259"/>
    </location>
</feature>
<feature type="binding site" evidence="2">
    <location>
        <position position="90"/>
    </location>
    <ligand>
        <name>DNA</name>
        <dbReference type="ChEBI" id="CHEBI:16991"/>
    </ligand>
</feature>
<feature type="binding site" evidence="2">
    <location>
        <position position="109"/>
    </location>
    <ligand>
        <name>DNA</name>
        <dbReference type="ChEBI" id="CHEBI:16991"/>
    </ligand>
</feature>
<feature type="binding site" evidence="2">
    <location>
        <position position="150"/>
    </location>
    <ligand>
        <name>DNA</name>
        <dbReference type="ChEBI" id="CHEBI:16991"/>
    </ligand>
</feature>